<reference key="1">
    <citation type="journal article" date="2006" name="Genome Res.">
        <title>Massive genome erosion and functional adaptations provide insights into the symbiotic lifestyle of Sodalis glossinidius in the tsetse host.</title>
        <authorList>
            <person name="Toh H."/>
            <person name="Weiss B.L."/>
            <person name="Perkin S.A.H."/>
            <person name="Yamashita A."/>
            <person name="Oshima K."/>
            <person name="Hattori M."/>
            <person name="Aksoy S."/>
        </authorList>
    </citation>
    <scope>NUCLEOTIDE SEQUENCE [LARGE SCALE GENOMIC DNA]</scope>
    <source>
        <strain>morsitans</strain>
    </source>
</reference>
<name>RRF_SODGM</name>
<gene>
    <name evidence="1" type="primary">frr</name>
    <name type="ordered locus">SG1940</name>
</gene>
<accession>Q2NRL0</accession>
<keyword id="KW-0963">Cytoplasm</keyword>
<keyword id="KW-0648">Protein biosynthesis</keyword>
<feature type="chain" id="PRO_1000003272" description="Ribosome-recycling factor">
    <location>
        <begin position="1"/>
        <end position="185"/>
    </location>
</feature>
<dbReference type="EMBL" id="AP008232">
    <property type="protein sequence ID" value="BAE75215.1"/>
    <property type="molecule type" value="Genomic_DNA"/>
</dbReference>
<dbReference type="RefSeq" id="WP_011411671.1">
    <property type="nucleotide sequence ID" value="NC_007712.1"/>
</dbReference>
<dbReference type="SMR" id="Q2NRL0"/>
<dbReference type="STRING" id="343509.SG1940"/>
<dbReference type="KEGG" id="sgl:SG1940"/>
<dbReference type="eggNOG" id="COG0233">
    <property type="taxonomic scope" value="Bacteria"/>
</dbReference>
<dbReference type="HOGENOM" id="CLU_073981_2_0_6"/>
<dbReference type="OrthoDB" id="9804006at2"/>
<dbReference type="BioCyc" id="SGLO343509:SGP1_RS17825-MONOMER"/>
<dbReference type="Proteomes" id="UP000001932">
    <property type="component" value="Chromosome"/>
</dbReference>
<dbReference type="GO" id="GO:0005829">
    <property type="term" value="C:cytosol"/>
    <property type="evidence" value="ECO:0007669"/>
    <property type="project" value="GOC"/>
</dbReference>
<dbReference type="GO" id="GO:0043023">
    <property type="term" value="F:ribosomal large subunit binding"/>
    <property type="evidence" value="ECO:0007669"/>
    <property type="project" value="TreeGrafter"/>
</dbReference>
<dbReference type="GO" id="GO:0002184">
    <property type="term" value="P:cytoplasmic translational termination"/>
    <property type="evidence" value="ECO:0007669"/>
    <property type="project" value="TreeGrafter"/>
</dbReference>
<dbReference type="CDD" id="cd00520">
    <property type="entry name" value="RRF"/>
    <property type="match status" value="1"/>
</dbReference>
<dbReference type="FunFam" id="1.10.132.20:FF:000001">
    <property type="entry name" value="Ribosome-recycling factor"/>
    <property type="match status" value="1"/>
</dbReference>
<dbReference type="FunFam" id="3.30.1360.40:FF:000001">
    <property type="entry name" value="Ribosome-recycling factor"/>
    <property type="match status" value="1"/>
</dbReference>
<dbReference type="Gene3D" id="3.30.1360.40">
    <property type="match status" value="1"/>
</dbReference>
<dbReference type="Gene3D" id="1.10.132.20">
    <property type="entry name" value="Ribosome-recycling factor"/>
    <property type="match status" value="1"/>
</dbReference>
<dbReference type="HAMAP" id="MF_00040">
    <property type="entry name" value="RRF"/>
    <property type="match status" value="1"/>
</dbReference>
<dbReference type="InterPro" id="IPR002661">
    <property type="entry name" value="Ribosome_recyc_fac"/>
</dbReference>
<dbReference type="InterPro" id="IPR023584">
    <property type="entry name" value="Ribosome_recyc_fac_dom"/>
</dbReference>
<dbReference type="InterPro" id="IPR036191">
    <property type="entry name" value="RRF_sf"/>
</dbReference>
<dbReference type="NCBIfam" id="TIGR00496">
    <property type="entry name" value="frr"/>
    <property type="match status" value="1"/>
</dbReference>
<dbReference type="PANTHER" id="PTHR20982:SF3">
    <property type="entry name" value="MITOCHONDRIAL RIBOSOME RECYCLING FACTOR PSEUDO 1"/>
    <property type="match status" value="1"/>
</dbReference>
<dbReference type="PANTHER" id="PTHR20982">
    <property type="entry name" value="RIBOSOME RECYCLING FACTOR"/>
    <property type="match status" value="1"/>
</dbReference>
<dbReference type="Pfam" id="PF01765">
    <property type="entry name" value="RRF"/>
    <property type="match status" value="1"/>
</dbReference>
<dbReference type="SUPFAM" id="SSF55194">
    <property type="entry name" value="Ribosome recycling factor, RRF"/>
    <property type="match status" value="1"/>
</dbReference>
<protein>
    <recommendedName>
        <fullName evidence="1">Ribosome-recycling factor</fullName>
        <shortName evidence="1">RRF</shortName>
    </recommendedName>
    <alternativeName>
        <fullName evidence="1">Ribosome-releasing factor</fullName>
    </alternativeName>
</protein>
<organism>
    <name type="scientific">Sodalis glossinidius (strain morsitans)</name>
    <dbReference type="NCBI Taxonomy" id="343509"/>
    <lineage>
        <taxon>Bacteria</taxon>
        <taxon>Pseudomonadati</taxon>
        <taxon>Pseudomonadota</taxon>
        <taxon>Gammaproteobacteria</taxon>
        <taxon>Enterobacterales</taxon>
        <taxon>Bruguierivoracaceae</taxon>
        <taxon>Sodalis</taxon>
    </lineage>
</organism>
<evidence type="ECO:0000255" key="1">
    <source>
        <dbReference type="HAMAP-Rule" id="MF_00040"/>
    </source>
</evidence>
<proteinExistence type="inferred from homology"/>
<sequence length="185" mass="20762">MINEIRKDAEIRMEKCVDAFKSHISKVRTGRASPSLLDGIQIDYYGLLTPLRQLANIIAEDSRTLAITVFDRTLAPAVEKAIMASDLGLNPSSAGTVIRVPLPPLTEERRRDLIKVVRAEAEQGRVSVRNVRRDANDKVKALLKDKTIGEDEDRRSQDEIQKLTDAWIKKLDSALAEKEAELMEI</sequence>
<comment type="function">
    <text evidence="1">Responsible for the release of ribosomes from messenger RNA at the termination of protein biosynthesis. May increase the efficiency of translation by recycling ribosomes from one round of translation to another.</text>
</comment>
<comment type="subcellular location">
    <subcellularLocation>
        <location evidence="1">Cytoplasm</location>
    </subcellularLocation>
</comment>
<comment type="similarity">
    <text evidence="1">Belongs to the RRF family.</text>
</comment>